<reference evidence="2" key="1">
    <citation type="journal article" date="2005" name="Phytochemistry">
        <title>Two cyclopeptides from the seeds of Annona cherimola.</title>
        <authorList>
            <person name="Wele A."/>
            <person name="Zhang Y."/>
            <person name="Brouard J.-P."/>
            <person name="Pousset J.-L."/>
            <person name="Bodo B."/>
        </authorList>
    </citation>
    <scope>PROTEIN SEQUENCE</scope>
    <scope>CROSS-LINK</scope>
    <scope>FUNCTION</scope>
    <scope>MASS SPECTROMETRY</scope>
    <source>
        <tissue evidence="1">Seed</tissue>
    </source>
</reference>
<accession>P85003</accession>
<name>CYCLE_ANNCH</name>
<sequence length="6" mass="653">PGLGFY</sequence>
<keyword id="KW-0903">Direct protein sequencing</keyword>
<keyword id="KW-0611">Plant defense</keyword>
<dbReference type="GO" id="GO:0006952">
    <property type="term" value="P:defense response"/>
    <property type="evidence" value="ECO:0000314"/>
    <property type="project" value="UniProtKB"/>
</dbReference>
<proteinExistence type="evidence at protein level"/>
<evidence type="ECO:0000269" key="1">
    <source>
    </source>
</evidence>
<evidence type="ECO:0000305" key="2"/>
<comment type="function">
    <text evidence="1">Probably participates in a plant defense mechanism. Has cytotoxic activity against human nasopharyngeal carcinoma with an IC(50) of 17 nM.</text>
</comment>
<comment type="PTM">
    <text evidence="1">This is a cyclic peptide.</text>
</comment>
<comment type="mass spectrometry" mass="635.0" method="Electrospray" evidence="1"/>
<organism>
    <name type="scientific">Annona cherimola</name>
    <name type="common">Custard apple</name>
    <name type="synonym">Cherimoya</name>
    <dbReference type="NCBI Taxonomy" id="49314"/>
    <lineage>
        <taxon>Eukaryota</taxon>
        <taxon>Viridiplantae</taxon>
        <taxon>Streptophyta</taxon>
        <taxon>Embryophyta</taxon>
        <taxon>Tracheophyta</taxon>
        <taxon>Spermatophyta</taxon>
        <taxon>Magnoliopsida</taxon>
        <taxon>Magnoliidae</taxon>
        <taxon>Magnoliales</taxon>
        <taxon>Annonaceae</taxon>
        <taxon>Annonoideae</taxon>
        <taxon>Annoneae</taxon>
        <taxon>Annona</taxon>
    </lineage>
</organism>
<protein>
    <recommendedName>
        <fullName>Cyclopeptide E</fullName>
    </recommendedName>
</protein>
<feature type="peptide" id="PRO_0000253927" description="Cyclopeptide E" evidence="1">
    <location>
        <begin position="1"/>
        <end position="6"/>
    </location>
</feature>
<feature type="cross-link" description="Cyclopeptide (Pro-Tyr)">
    <location>
        <begin position="1"/>
        <end position="6"/>
    </location>
</feature>